<sequence>MTSDRPLKLLISNDDGISALGVRTLANTLATAGHQVTVVCPDGERSATGHGLTLHHPIRAEQVEGIFHPDVIAWSCSGTPADSVKFALSAVLKERPDLVLAGINHGSNLGTDILYSGTVSAALEGLIEGIPSIAFSLASFKACDFQPAADFALTLVRKVALNPFPLPTLLNVNVPPVSSGEIKGVKITRQGLRHYEETFEKRLDPRGKSYYWLIGEVVEDIEQPDYTHLPPEVPTDVRAIGENFITITPLQYNLTDVQGFQHLHRNSWFD</sequence>
<reference key="1">
    <citation type="journal article" date="2007" name="DNA Res.">
        <title>Complete genomic structure of the bloom-forming toxic cyanobacterium Microcystis aeruginosa NIES-843.</title>
        <authorList>
            <person name="Kaneko T."/>
            <person name="Nakajima N."/>
            <person name="Okamoto S."/>
            <person name="Suzuki I."/>
            <person name="Tanabe Y."/>
            <person name="Tamaoki M."/>
            <person name="Nakamura Y."/>
            <person name="Kasai F."/>
            <person name="Watanabe A."/>
            <person name="Kawashima K."/>
            <person name="Kishida Y."/>
            <person name="Ono A."/>
            <person name="Shimizu Y."/>
            <person name="Takahashi C."/>
            <person name="Minami C."/>
            <person name="Fujishiro T."/>
            <person name="Kohara M."/>
            <person name="Katoh M."/>
            <person name="Nakazaki N."/>
            <person name="Nakayama S."/>
            <person name="Yamada M."/>
            <person name="Tabata S."/>
            <person name="Watanabe M.M."/>
        </authorList>
    </citation>
    <scope>NUCLEOTIDE SEQUENCE [LARGE SCALE GENOMIC DNA]</scope>
    <source>
        <strain>NIES-843 / IAM M-247</strain>
    </source>
</reference>
<proteinExistence type="inferred from homology"/>
<name>SURE_MICAN</name>
<protein>
    <recommendedName>
        <fullName evidence="1">5'-nucleotidase SurE</fullName>
        <ecNumber evidence="1">3.1.3.5</ecNumber>
    </recommendedName>
    <alternativeName>
        <fullName evidence="1">Nucleoside 5'-monophosphate phosphohydrolase</fullName>
    </alternativeName>
</protein>
<keyword id="KW-0963">Cytoplasm</keyword>
<keyword id="KW-0378">Hydrolase</keyword>
<keyword id="KW-0479">Metal-binding</keyword>
<keyword id="KW-0547">Nucleotide-binding</keyword>
<organism>
    <name type="scientific">Microcystis aeruginosa (strain NIES-843 / IAM M-2473)</name>
    <dbReference type="NCBI Taxonomy" id="449447"/>
    <lineage>
        <taxon>Bacteria</taxon>
        <taxon>Bacillati</taxon>
        <taxon>Cyanobacteriota</taxon>
        <taxon>Cyanophyceae</taxon>
        <taxon>Oscillatoriophycideae</taxon>
        <taxon>Chroococcales</taxon>
        <taxon>Microcystaceae</taxon>
        <taxon>Microcystis</taxon>
    </lineage>
</organism>
<dbReference type="EC" id="3.1.3.5" evidence="1"/>
<dbReference type="EMBL" id="AP009552">
    <property type="protein sequence ID" value="BAG04887.1"/>
    <property type="molecule type" value="Genomic_DNA"/>
</dbReference>
<dbReference type="RefSeq" id="WP_012267497.1">
    <property type="nucleotide sequence ID" value="NC_010296.1"/>
</dbReference>
<dbReference type="SMR" id="B0JX00"/>
<dbReference type="STRING" id="449447.MAE_50650"/>
<dbReference type="PaxDb" id="449447-MAE_50650"/>
<dbReference type="EnsemblBacteria" id="BAG04887">
    <property type="protein sequence ID" value="BAG04887"/>
    <property type="gene ID" value="MAE_50650"/>
</dbReference>
<dbReference type="KEGG" id="mar:MAE_50650"/>
<dbReference type="PATRIC" id="fig|449447.4.peg.4606"/>
<dbReference type="eggNOG" id="COG0496">
    <property type="taxonomic scope" value="Bacteria"/>
</dbReference>
<dbReference type="HOGENOM" id="CLU_045192_1_3_3"/>
<dbReference type="BioCyc" id="MAER449447:MAE_RS21990-MONOMER"/>
<dbReference type="Proteomes" id="UP000001510">
    <property type="component" value="Chromosome"/>
</dbReference>
<dbReference type="GO" id="GO:0005737">
    <property type="term" value="C:cytoplasm"/>
    <property type="evidence" value="ECO:0007669"/>
    <property type="project" value="UniProtKB-SubCell"/>
</dbReference>
<dbReference type="GO" id="GO:0008254">
    <property type="term" value="F:3'-nucleotidase activity"/>
    <property type="evidence" value="ECO:0007669"/>
    <property type="project" value="TreeGrafter"/>
</dbReference>
<dbReference type="GO" id="GO:0008253">
    <property type="term" value="F:5'-nucleotidase activity"/>
    <property type="evidence" value="ECO:0007669"/>
    <property type="project" value="UniProtKB-UniRule"/>
</dbReference>
<dbReference type="GO" id="GO:0004309">
    <property type="term" value="F:exopolyphosphatase activity"/>
    <property type="evidence" value="ECO:0007669"/>
    <property type="project" value="TreeGrafter"/>
</dbReference>
<dbReference type="GO" id="GO:0046872">
    <property type="term" value="F:metal ion binding"/>
    <property type="evidence" value="ECO:0007669"/>
    <property type="project" value="UniProtKB-UniRule"/>
</dbReference>
<dbReference type="GO" id="GO:0000166">
    <property type="term" value="F:nucleotide binding"/>
    <property type="evidence" value="ECO:0007669"/>
    <property type="project" value="UniProtKB-KW"/>
</dbReference>
<dbReference type="FunFam" id="3.40.1210.10:FF:000001">
    <property type="entry name" value="5'/3'-nucleotidase SurE"/>
    <property type="match status" value="1"/>
</dbReference>
<dbReference type="Gene3D" id="3.40.1210.10">
    <property type="entry name" value="Survival protein SurE-like phosphatase/nucleotidase"/>
    <property type="match status" value="1"/>
</dbReference>
<dbReference type="HAMAP" id="MF_00060">
    <property type="entry name" value="SurE"/>
    <property type="match status" value="1"/>
</dbReference>
<dbReference type="InterPro" id="IPR030048">
    <property type="entry name" value="SurE"/>
</dbReference>
<dbReference type="InterPro" id="IPR002828">
    <property type="entry name" value="SurE-like_Pase/nucleotidase"/>
</dbReference>
<dbReference type="InterPro" id="IPR036523">
    <property type="entry name" value="SurE-like_sf"/>
</dbReference>
<dbReference type="NCBIfam" id="NF001490">
    <property type="entry name" value="PRK00346.1-4"/>
    <property type="match status" value="1"/>
</dbReference>
<dbReference type="NCBIfam" id="NF001492">
    <property type="entry name" value="PRK00346.2-2"/>
    <property type="match status" value="1"/>
</dbReference>
<dbReference type="NCBIfam" id="TIGR00087">
    <property type="entry name" value="surE"/>
    <property type="match status" value="1"/>
</dbReference>
<dbReference type="PANTHER" id="PTHR30457">
    <property type="entry name" value="5'-NUCLEOTIDASE SURE"/>
    <property type="match status" value="1"/>
</dbReference>
<dbReference type="PANTHER" id="PTHR30457:SF12">
    <property type="entry name" value="5'_3'-NUCLEOTIDASE SURE"/>
    <property type="match status" value="1"/>
</dbReference>
<dbReference type="Pfam" id="PF01975">
    <property type="entry name" value="SurE"/>
    <property type="match status" value="1"/>
</dbReference>
<dbReference type="SUPFAM" id="SSF64167">
    <property type="entry name" value="SurE-like"/>
    <property type="match status" value="1"/>
</dbReference>
<feature type="chain" id="PRO_1000075032" description="5'-nucleotidase SurE">
    <location>
        <begin position="1"/>
        <end position="270"/>
    </location>
</feature>
<feature type="binding site" evidence="1">
    <location>
        <position position="14"/>
    </location>
    <ligand>
        <name>a divalent metal cation</name>
        <dbReference type="ChEBI" id="CHEBI:60240"/>
    </ligand>
</feature>
<feature type="binding site" evidence="1">
    <location>
        <position position="15"/>
    </location>
    <ligand>
        <name>a divalent metal cation</name>
        <dbReference type="ChEBI" id="CHEBI:60240"/>
    </ligand>
</feature>
<feature type="binding site" evidence="1">
    <location>
        <position position="46"/>
    </location>
    <ligand>
        <name>a divalent metal cation</name>
        <dbReference type="ChEBI" id="CHEBI:60240"/>
    </ligand>
</feature>
<feature type="binding site" evidence="1">
    <location>
        <position position="104"/>
    </location>
    <ligand>
        <name>a divalent metal cation</name>
        <dbReference type="ChEBI" id="CHEBI:60240"/>
    </ligand>
</feature>
<evidence type="ECO:0000255" key="1">
    <source>
        <dbReference type="HAMAP-Rule" id="MF_00060"/>
    </source>
</evidence>
<gene>
    <name evidence="1" type="primary">surE</name>
    <name type="ordered locus">MAE_50650</name>
</gene>
<accession>B0JX00</accession>
<comment type="function">
    <text evidence="1">Nucleotidase that shows phosphatase activity on nucleoside 5'-monophosphates.</text>
</comment>
<comment type="catalytic activity">
    <reaction evidence="1">
        <text>a ribonucleoside 5'-phosphate + H2O = a ribonucleoside + phosphate</text>
        <dbReference type="Rhea" id="RHEA:12484"/>
        <dbReference type="ChEBI" id="CHEBI:15377"/>
        <dbReference type="ChEBI" id="CHEBI:18254"/>
        <dbReference type="ChEBI" id="CHEBI:43474"/>
        <dbReference type="ChEBI" id="CHEBI:58043"/>
        <dbReference type="EC" id="3.1.3.5"/>
    </reaction>
</comment>
<comment type="cofactor">
    <cofactor evidence="1">
        <name>a divalent metal cation</name>
        <dbReference type="ChEBI" id="CHEBI:60240"/>
    </cofactor>
    <text evidence="1">Binds 1 divalent metal cation per subunit.</text>
</comment>
<comment type="subcellular location">
    <subcellularLocation>
        <location evidence="1">Cytoplasm</location>
    </subcellularLocation>
</comment>
<comment type="similarity">
    <text evidence="1">Belongs to the SurE nucleotidase family.</text>
</comment>